<feature type="chain" id="PRO_1000144798" description="Hydroxyacylglutathione hydrolase">
    <location>
        <begin position="1"/>
        <end position="251"/>
    </location>
</feature>
<feature type="binding site" evidence="1">
    <location>
        <position position="53"/>
    </location>
    <ligand>
        <name>Zn(2+)</name>
        <dbReference type="ChEBI" id="CHEBI:29105"/>
        <label>1</label>
    </ligand>
</feature>
<feature type="binding site" evidence="1">
    <location>
        <position position="55"/>
    </location>
    <ligand>
        <name>Zn(2+)</name>
        <dbReference type="ChEBI" id="CHEBI:29105"/>
        <label>1</label>
    </ligand>
</feature>
<feature type="binding site" evidence="1">
    <location>
        <position position="57"/>
    </location>
    <ligand>
        <name>Zn(2+)</name>
        <dbReference type="ChEBI" id="CHEBI:29105"/>
        <label>2</label>
    </ligand>
</feature>
<feature type="binding site" evidence="1">
    <location>
        <position position="58"/>
    </location>
    <ligand>
        <name>Zn(2+)</name>
        <dbReference type="ChEBI" id="CHEBI:29105"/>
        <label>2</label>
    </ligand>
</feature>
<feature type="binding site" evidence="1">
    <location>
        <position position="110"/>
    </location>
    <ligand>
        <name>Zn(2+)</name>
        <dbReference type="ChEBI" id="CHEBI:29105"/>
        <label>1</label>
    </ligand>
</feature>
<feature type="binding site" evidence="1">
    <location>
        <position position="127"/>
    </location>
    <ligand>
        <name>Zn(2+)</name>
        <dbReference type="ChEBI" id="CHEBI:29105"/>
        <label>1</label>
    </ligand>
</feature>
<feature type="binding site" evidence="1">
    <location>
        <position position="127"/>
    </location>
    <ligand>
        <name>Zn(2+)</name>
        <dbReference type="ChEBI" id="CHEBI:29105"/>
        <label>2</label>
    </ligand>
</feature>
<feature type="binding site" evidence="1">
    <location>
        <position position="165"/>
    </location>
    <ligand>
        <name>Zn(2+)</name>
        <dbReference type="ChEBI" id="CHEBI:29105"/>
        <label>2</label>
    </ligand>
</feature>
<organism>
    <name type="scientific">Salmonella heidelberg (strain SL476)</name>
    <dbReference type="NCBI Taxonomy" id="454169"/>
    <lineage>
        <taxon>Bacteria</taxon>
        <taxon>Pseudomonadati</taxon>
        <taxon>Pseudomonadota</taxon>
        <taxon>Gammaproteobacteria</taxon>
        <taxon>Enterobacterales</taxon>
        <taxon>Enterobacteriaceae</taxon>
        <taxon>Salmonella</taxon>
    </lineage>
</organism>
<reference key="1">
    <citation type="journal article" date="2011" name="J. Bacteriol.">
        <title>Comparative genomics of 28 Salmonella enterica isolates: evidence for CRISPR-mediated adaptive sublineage evolution.</title>
        <authorList>
            <person name="Fricke W.F."/>
            <person name="Mammel M.K."/>
            <person name="McDermott P.F."/>
            <person name="Tartera C."/>
            <person name="White D.G."/>
            <person name="Leclerc J.E."/>
            <person name="Ravel J."/>
            <person name="Cebula T.A."/>
        </authorList>
    </citation>
    <scope>NUCLEOTIDE SEQUENCE [LARGE SCALE GENOMIC DNA]</scope>
    <source>
        <strain>SL476</strain>
    </source>
</reference>
<comment type="function">
    <text evidence="1">Thiolesterase that catalyzes the hydrolysis of S-D-lactoyl-glutathione to form glutathione and D-lactic acid.</text>
</comment>
<comment type="catalytic activity">
    <reaction evidence="1">
        <text>an S-(2-hydroxyacyl)glutathione + H2O = a 2-hydroxy carboxylate + glutathione + H(+)</text>
        <dbReference type="Rhea" id="RHEA:21864"/>
        <dbReference type="ChEBI" id="CHEBI:15377"/>
        <dbReference type="ChEBI" id="CHEBI:15378"/>
        <dbReference type="ChEBI" id="CHEBI:57925"/>
        <dbReference type="ChEBI" id="CHEBI:58896"/>
        <dbReference type="ChEBI" id="CHEBI:71261"/>
        <dbReference type="EC" id="3.1.2.6"/>
    </reaction>
</comment>
<comment type="cofactor">
    <cofactor evidence="1">
        <name>Zn(2+)</name>
        <dbReference type="ChEBI" id="CHEBI:29105"/>
    </cofactor>
    <text evidence="1">Binds 2 Zn(2+) ions per subunit.</text>
</comment>
<comment type="pathway">
    <text evidence="1">Secondary metabolite metabolism; methylglyoxal degradation; (R)-lactate from methylglyoxal: step 2/2.</text>
</comment>
<comment type="subunit">
    <text evidence="1">Monomer.</text>
</comment>
<comment type="similarity">
    <text evidence="1">Belongs to the metallo-beta-lactamase superfamily. Glyoxalase II family.</text>
</comment>
<dbReference type="EC" id="3.1.2.6" evidence="1"/>
<dbReference type="EMBL" id="CP001120">
    <property type="protein sequence ID" value="ACF66976.1"/>
    <property type="molecule type" value="Genomic_DNA"/>
</dbReference>
<dbReference type="RefSeq" id="WP_001052773.1">
    <property type="nucleotide sequence ID" value="NC_011083.1"/>
</dbReference>
<dbReference type="SMR" id="B4TK83"/>
<dbReference type="KEGG" id="seh:SeHA_C0299"/>
<dbReference type="HOGENOM" id="CLU_030571_4_1_6"/>
<dbReference type="UniPathway" id="UPA00619">
    <property type="reaction ID" value="UER00676"/>
</dbReference>
<dbReference type="Proteomes" id="UP000001866">
    <property type="component" value="Chromosome"/>
</dbReference>
<dbReference type="GO" id="GO:0004416">
    <property type="term" value="F:hydroxyacylglutathione hydrolase activity"/>
    <property type="evidence" value="ECO:0007669"/>
    <property type="project" value="UniProtKB-UniRule"/>
</dbReference>
<dbReference type="GO" id="GO:0046872">
    <property type="term" value="F:metal ion binding"/>
    <property type="evidence" value="ECO:0007669"/>
    <property type="project" value="UniProtKB-KW"/>
</dbReference>
<dbReference type="GO" id="GO:0019243">
    <property type="term" value="P:methylglyoxal catabolic process to D-lactate via S-lactoyl-glutathione"/>
    <property type="evidence" value="ECO:0007669"/>
    <property type="project" value="InterPro"/>
</dbReference>
<dbReference type="CDD" id="cd07723">
    <property type="entry name" value="hydroxyacylglutathione_hydrolase_MBL-fold"/>
    <property type="match status" value="1"/>
</dbReference>
<dbReference type="Gene3D" id="3.60.15.10">
    <property type="entry name" value="Ribonuclease Z/Hydroxyacylglutathione hydrolase-like"/>
    <property type="match status" value="1"/>
</dbReference>
<dbReference type="HAMAP" id="MF_01374">
    <property type="entry name" value="Glyoxalase_2"/>
    <property type="match status" value="1"/>
</dbReference>
<dbReference type="InterPro" id="IPR035680">
    <property type="entry name" value="Clx_II_MBL"/>
</dbReference>
<dbReference type="InterPro" id="IPR050110">
    <property type="entry name" value="Glyoxalase_II_hydrolase"/>
</dbReference>
<dbReference type="InterPro" id="IPR032282">
    <property type="entry name" value="HAGH_C"/>
</dbReference>
<dbReference type="InterPro" id="IPR017782">
    <property type="entry name" value="Hydroxyacylglutathione_Hdrlase"/>
</dbReference>
<dbReference type="InterPro" id="IPR001279">
    <property type="entry name" value="Metallo-B-lactamas"/>
</dbReference>
<dbReference type="InterPro" id="IPR036866">
    <property type="entry name" value="RibonucZ/Hydroxyglut_hydro"/>
</dbReference>
<dbReference type="NCBIfam" id="TIGR03413">
    <property type="entry name" value="GSH_gloB"/>
    <property type="match status" value="1"/>
</dbReference>
<dbReference type="NCBIfam" id="NF007597">
    <property type="entry name" value="PRK10241.1"/>
    <property type="match status" value="1"/>
</dbReference>
<dbReference type="PANTHER" id="PTHR43705">
    <property type="entry name" value="HYDROXYACYLGLUTATHIONE HYDROLASE"/>
    <property type="match status" value="1"/>
</dbReference>
<dbReference type="PANTHER" id="PTHR43705:SF1">
    <property type="entry name" value="HYDROXYACYLGLUTATHIONE HYDROLASE GLOB"/>
    <property type="match status" value="1"/>
</dbReference>
<dbReference type="Pfam" id="PF16123">
    <property type="entry name" value="HAGH_C"/>
    <property type="match status" value="1"/>
</dbReference>
<dbReference type="Pfam" id="PF00753">
    <property type="entry name" value="Lactamase_B"/>
    <property type="match status" value="1"/>
</dbReference>
<dbReference type="PIRSF" id="PIRSF005457">
    <property type="entry name" value="Glx"/>
    <property type="match status" value="1"/>
</dbReference>
<dbReference type="SMART" id="SM00849">
    <property type="entry name" value="Lactamase_B"/>
    <property type="match status" value="1"/>
</dbReference>
<dbReference type="SUPFAM" id="SSF56281">
    <property type="entry name" value="Metallo-hydrolase/oxidoreductase"/>
    <property type="match status" value="1"/>
</dbReference>
<gene>
    <name evidence="1" type="primary">gloB</name>
    <name type="ordered locus">SeHA_C0299</name>
</gene>
<protein>
    <recommendedName>
        <fullName evidence="1">Hydroxyacylglutathione hydrolase</fullName>
        <ecNumber evidence="1">3.1.2.6</ecNumber>
    </recommendedName>
    <alternativeName>
        <fullName evidence="1">Glyoxalase II</fullName>
        <shortName evidence="1">Glx II</shortName>
    </alternativeName>
</protein>
<name>GLO2_SALHS</name>
<keyword id="KW-0378">Hydrolase</keyword>
<keyword id="KW-0479">Metal-binding</keyword>
<keyword id="KW-0862">Zinc</keyword>
<accession>B4TK83</accession>
<evidence type="ECO:0000255" key="1">
    <source>
        <dbReference type="HAMAP-Rule" id="MF_01374"/>
    </source>
</evidence>
<proteinExistence type="inferred from homology"/>
<sequence length="251" mass="28614">MNLNSIPAFQDNYIWVLTNDEGRCVIVDPGEAAPVLKAIAEHKWMPEAIFLTHHHHDHVGGVKELLQHFPQMTVYGPAETQDKGATHLVGDGDTIRVLGEKFTLFATPGHTLGHVCYFSHPYLFCGDTLFSGGCGRLFEGTPSQMYQSLMKINSLPDDTLICCAHEYTLANIKFALSILPHDSFINEYYRKVKELRVKKQMTLPVILKNERKINLFLRTEDIDLINEINKETILQQPEARFAWLRSKKDTF</sequence>